<protein>
    <recommendedName>
        <fullName>Short transient receptor potential channel 7</fullName>
        <shortName>TrpC7</shortName>
    </recommendedName>
    <alternativeName>
        <fullName>Transient receptor protein 7</fullName>
        <shortName>TRP-7</shortName>
        <shortName>mTRP7</shortName>
    </alternativeName>
</protein>
<feature type="chain" id="PRO_0000215325" description="Short transient receptor potential channel 7">
    <location>
        <begin position="1"/>
        <end position="862"/>
    </location>
</feature>
<feature type="topological domain" description="Cytoplasmic" evidence="2">
    <location>
        <begin position="1"/>
        <end position="351"/>
    </location>
</feature>
<feature type="transmembrane region" description="Helical" evidence="2">
    <location>
        <begin position="352"/>
        <end position="372"/>
    </location>
</feature>
<feature type="topological domain" description="Extracellular" evidence="2">
    <location>
        <begin position="373"/>
        <end position="383"/>
    </location>
</feature>
<feature type="transmembrane region" description="Helical" evidence="2">
    <location>
        <begin position="384"/>
        <end position="404"/>
    </location>
</feature>
<feature type="topological domain" description="Cytoplasmic" evidence="2">
    <location>
        <begin position="405"/>
        <end position="465"/>
    </location>
</feature>
<feature type="transmembrane region" description="Helical" evidence="2">
    <location>
        <begin position="466"/>
        <end position="486"/>
    </location>
</feature>
<feature type="topological domain" description="Extracellular" evidence="2">
    <location>
        <begin position="487"/>
        <end position="537"/>
    </location>
</feature>
<feature type="transmembrane region" description="Helical" evidence="2">
    <location>
        <begin position="538"/>
        <end position="558"/>
    </location>
</feature>
<feature type="topological domain" description="Cytoplasmic" evidence="2">
    <location>
        <begin position="559"/>
        <end position="581"/>
    </location>
</feature>
<feature type="transmembrane region" description="Helical" evidence="2">
    <location>
        <begin position="582"/>
        <end position="602"/>
    </location>
</feature>
<feature type="topological domain" description="Extracellular" evidence="2">
    <location>
        <begin position="603"/>
        <end position="651"/>
    </location>
</feature>
<feature type="transmembrane region" description="Helical" evidence="2">
    <location>
        <begin position="652"/>
        <end position="672"/>
    </location>
</feature>
<feature type="topological domain" description="Cytoplasmic" evidence="2">
    <location>
        <begin position="673"/>
        <end position="862"/>
    </location>
</feature>
<feature type="repeat" description="ANK 1">
    <location>
        <begin position="42"/>
        <end position="71"/>
    </location>
</feature>
<feature type="repeat" description="ANK 2">
    <location>
        <begin position="77"/>
        <end position="106"/>
    </location>
</feature>
<feature type="repeat" description="ANK 3">
    <location>
        <begin position="108"/>
        <end position="134"/>
    </location>
</feature>
<feature type="repeat" description="ANK 4">
    <location>
        <begin position="163"/>
        <end position="192"/>
    </location>
</feature>
<feature type="region of interest" description="Disordered" evidence="3">
    <location>
        <begin position="1"/>
        <end position="21"/>
    </location>
</feature>
<feature type="compositionally biased region" description="Basic residues" evidence="3">
    <location>
        <begin position="10"/>
        <end position="21"/>
    </location>
</feature>
<feature type="modified residue" description="Phosphothreonine; by PKG/PRKG1" evidence="1">
    <location>
        <position position="15"/>
    </location>
</feature>
<feature type="glycosylation site" description="N-linked (GlcNAc...) asparagine" evidence="2">
    <location>
        <position position="514"/>
    </location>
</feature>
<gene>
    <name type="primary">Trpc7</name>
    <name type="synonym">Trp7</name>
    <name type="synonym">Trrp8</name>
</gene>
<evidence type="ECO:0000250" key="1">
    <source>
        <dbReference type="UniProtKB" id="Q9HCX4"/>
    </source>
</evidence>
<evidence type="ECO:0000255" key="2"/>
<evidence type="ECO:0000256" key="3">
    <source>
        <dbReference type="SAM" id="MobiDB-lite"/>
    </source>
</evidence>
<evidence type="ECO:0000269" key="4">
    <source>
    </source>
</evidence>
<evidence type="ECO:0000305" key="5"/>
<comment type="function">
    <text evidence="4">Forms a receptor-activated non-selective calcium permeant cation channel. Probably is operated by a phosphatidylinositol second messenger system activated by receptor tyrosine kinases or G-protein coupled receptors. Activated by diacylglycerol (DAG). May also be activated by intracellular calcium store depletion.</text>
</comment>
<comment type="catalytic activity">
    <reaction evidence="4">
        <text>Ca(2+)(in) = Ca(2+)(out)</text>
        <dbReference type="Rhea" id="RHEA:29671"/>
        <dbReference type="ChEBI" id="CHEBI:29108"/>
    </reaction>
</comment>
<comment type="subunit">
    <text evidence="1">Interacts with MX1 and RNF24. Interacts (via ANK-repeat domains) with PRKG1.</text>
</comment>
<comment type="subcellular location">
    <subcellularLocation>
        <location evidence="1">Cell membrane</location>
        <topology evidence="2">Multi-pass membrane protein</topology>
    </subcellularLocation>
    <subcellularLocation>
        <location evidence="1">Nucleus envelope</location>
    </subcellularLocation>
</comment>
<comment type="PTM">
    <text evidence="1">Phosphorylation by PRKG1 at Thr-15 negatively regulates TRPC7 activity.</text>
</comment>
<comment type="similarity">
    <text evidence="5">Belongs to the transient receptor (TC 1.A.4) family. STrpC subfamily. TRPC7 sub-subfamily.</text>
</comment>
<sequence>MLGSNTFKNMQRRHTTLREKGRRQAIRGPAYMFNEKGTSLTPEEERFLDSAEYGNIPVVRKMLEESKTLNFNCVDYMGQNALQLAVGNEHLEVTELLLKKENLARVGDALLLAISKGYVRIVEAILSHPAFAQGQRLTLSPLEQELRDDDFYAYDEDGTRFSHDITPIILAAHCQEYEIVHILLLKGARIERPHDYFCKCNECTEKQRKDSFSHSRSRMNAYKGLASAAYLSLSSEDPVLTALELSNELARLANIETEFKNDYRKLSMQCKDFVVGVLDLCRDTEEVEAILNGDVNLQVWSDHHRPSLSRIKLAIKYEVKKFVAHPNCQQQLLTMWYENLSGLRQQSIAVKFLAVFGVSIGLPFLAIAYWIAPCSKLGQTLRSPFMKFVAHAVSFTIFLGLLVVNASDRFEGVKTLPNETFTDYPKQIFRVKTTQFSWTEMLIMKWVLGMIWSECKEIWEEGPREYVLHLWNLLDFGMLSIFVASFTARFMAFLKASEAQLYVDQYVQDVTLHNVSLPPEVAYFTYARDKWWPSDPQIISEGLYAIAVVLSFSRIAYILPANESFGPLQISLGRTVKDIFKFMVIFIMVFVAFMIGMFNLYSYYRGAKYNPAFTTVEESFKTLFWSIFGLSEVISVVLKYDHKFIENIGYVLYGVYNVTMVVVLLNMLIAMINNSYQEIEEDADVEWKFARAKLWLSYFDEGRTLPAPFNLVPSPKSFYYLIMRIKMCLIELCQSKAKRCENDLEMGMLNSKFRKTRYQAGMRNSENLTANSTFSKPTRYQKIMKRLIKRYVLKAQVDRENDEVNEGELKEIKQDISSLRYELLEEKSQATGELADLIQQLSEKFGKNLNKDHLRVNQGKDI</sequence>
<reference key="1">
    <citation type="journal article" date="1999" name="J. Biol. Chem.">
        <title>Molecular and functional characterization of a novel mouse transient receptor potential protein homologue TRP7. Ca(2+)-permeable cation channel that is constitutively activated and enhanced by stimulation of G protein-coupled receptor.</title>
        <authorList>
            <person name="Okada T."/>
            <person name="Inoue R."/>
            <person name="Yamazaki K."/>
            <person name="Maeda A."/>
            <person name="Kurosaki T."/>
            <person name="Yamakuni T."/>
            <person name="Tanaka I."/>
            <person name="Shimizu S."/>
            <person name="Ikenaka K."/>
            <person name="Imoto K."/>
            <person name="Mori Y."/>
        </authorList>
    </citation>
    <scope>NUCLEOTIDE SEQUENCE [MRNA]</scope>
    <scope>FUNCTION</scope>
    <scope>TRANSPORTER ACTIVITY</scope>
</reference>
<keyword id="KW-0040">ANK repeat</keyword>
<keyword id="KW-0106">Calcium</keyword>
<keyword id="KW-0107">Calcium channel</keyword>
<keyword id="KW-0109">Calcium transport</keyword>
<keyword id="KW-1003">Cell membrane</keyword>
<keyword id="KW-0325">Glycoprotein</keyword>
<keyword id="KW-0407">Ion channel</keyword>
<keyword id="KW-0406">Ion transport</keyword>
<keyword id="KW-0472">Membrane</keyword>
<keyword id="KW-0539">Nucleus</keyword>
<keyword id="KW-0597">Phosphoprotein</keyword>
<keyword id="KW-1185">Reference proteome</keyword>
<keyword id="KW-0677">Repeat</keyword>
<keyword id="KW-0812">Transmembrane</keyword>
<keyword id="KW-1133">Transmembrane helix</keyword>
<keyword id="KW-0813">Transport</keyword>
<proteinExistence type="evidence at transcript level"/>
<dbReference type="EMBL" id="AF139923">
    <property type="protein sequence ID" value="AAD42069.1"/>
    <property type="molecule type" value="mRNA"/>
</dbReference>
<dbReference type="CCDS" id="CCDS26566.1"/>
<dbReference type="RefSeq" id="NP_036165.1">
    <property type="nucleotide sequence ID" value="NM_012035.3"/>
</dbReference>
<dbReference type="SMR" id="Q9WVC5"/>
<dbReference type="FunCoup" id="Q9WVC5">
    <property type="interactions" value="27"/>
</dbReference>
<dbReference type="IntAct" id="Q9WVC5">
    <property type="interactions" value="1"/>
</dbReference>
<dbReference type="STRING" id="10090.ENSMUSP00000022023"/>
<dbReference type="BindingDB" id="Q9WVC5"/>
<dbReference type="ChEMBL" id="CHEMBL4523502"/>
<dbReference type="DrugCentral" id="Q9WVC5"/>
<dbReference type="TCDB" id="1.A.4.1.2">
    <property type="family name" value="the transient receptor potential ca2+/cation channel (trp-cc) family"/>
</dbReference>
<dbReference type="GlyCosmos" id="Q9WVC5">
    <property type="glycosylation" value="1 site, No reported glycans"/>
</dbReference>
<dbReference type="GlyGen" id="Q9WVC5">
    <property type="glycosylation" value="2 sites, 1 N-linked glycan (1 site)"/>
</dbReference>
<dbReference type="iPTMnet" id="Q9WVC5"/>
<dbReference type="PhosphoSitePlus" id="Q9WVC5"/>
<dbReference type="PaxDb" id="10090-ENSMUSP00000022023"/>
<dbReference type="ProteomicsDB" id="258985"/>
<dbReference type="Antibodypedia" id="26493">
    <property type="antibodies" value="304 antibodies from 34 providers"/>
</dbReference>
<dbReference type="DNASU" id="26946"/>
<dbReference type="Ensembl" id="ENSMUST00000022023.13">
    <property type="protein sequence ID" value="ENSMUSP00000022023.7"/>
    <property type="gene ID" value="ENSMUSG00000021541.15"/>
</dbReference>
<dbReference type="GeneID" id="26946"/>
<dbReference type="KEGG" id="mmu:26946"/>
<dbReference type="UCSC" id="uc007qtb.2">
    <property type="organism name" value="mouse"/>
</dbReference>
<dbReference type="AGR" id="MGI:1349470"/>
<dbReference type="CTD" id="57113"/>
<dbReference type="MGI" id="MGI:1349470">
    <property type="gene designation" value="Trpc7"/>
</dbReference>
<dbReference type="VEuPathDB" id="HostDB:ENSMUSG00000021541"/>
<dbReference type="eggNOG" id="KOG3609">
    <property type="taxonomic scope" value="Eukaryota"/>
</dbReference>
<dbReference type="GeneTree" id="ENSGT01060000248588"/>
<dbReference type="InParanoid" id="Q9WVC5"/>
<dbReference type="OMA" id="CLECMEK"/>
<dbReference type="OrthoDB" id="2373987at2759"/>
<dbReference type="PhylomeDB" id="Q9WVC5"/>
<dbReference type="TreeFam" id="TF313147"/>
<dbReference type="Reactome" id="R-MMU-114508">
    <property type="pathway name" value="Effects of PIP2 hydrolysis"/>
</dbReference>
<dbReference type="Reactome" id="R-MMU-139853">
    <property type="pathway name" value="Elevation of cytosolic Ca2+ levels"/>
</dbReference>
<dbReference type="Reactome" id="R-MMU-3295583">
    <property type="pathway name" value="TRP channels"/>
</dbReference>
<dbReference type="BioGRID-ORCS" id="26946">
    <property type="hits" value="1 hit in 76 CRISPR screens"/>
</dbReference>
<dbReference type="PRO" id="PR:Q9WVC5"/>
<dbReference type="Proteomes" id="UP000000589">
    <property type="component" value="Chromosome 13"/>
</dbReference>
<dbReference type="RNAct" id="Q9WVC5">
    <property type="molecule type" value="protein"/>
</dbReference>
<dbReference type="Bgee" id="ENSMUSG00000021541">
    <property type="expression patterns" value="Expressed in lateral septal nucleus and 82 other cell types or tissues"/>
</dbReference>
<dbReference type="ExpressionAtlas" id="Q9WVC5">
    <property type="expression patterns" value="baseline and differential"/>
</dbReference>
<dbReference type="GO" id="GO:0016020">
    <property type="term" value="C:membrane"/>
    <property type="evidence" value="ECO:0000305"/>
    <property type="project" value="MGI"/>
</dbReference>
<dbReference type="GO" id="GO:0005635">
    <property type="term" value="C:nuclear envelope"/>
    <property type="evidence" value="ECO:0007669"/>
    <property type="project" value="UniProtKB-SubCell"/>
</dbReference>
<dbReference type="GO" id="GO:0048471">
    <property type="term" value="C:perinuclear region of cytoplasm"/>
    <property type="evidence" value="ECO:0007669"/>
    <property type="project" value="Ensembl"/>
</dbReference>
<dbReference type="GO" id="GO:0005886">
    <property type="term" value="C:plasma membrane"/>
    <property type="evidence" value="ECO:0007669"/>
    <property type="project" value="UniProtKB-SubCell"/>
</dbReference>
<dbReference type="GO" id="GO:0005262">
    <property type="term" value="F:calcium channel activity"/>
    <property type="evidence" value="ECO:0000314"/>
    <property type="project" value="MGI"/>
</dbReference>
<dbReference type="GO" id="GO:0006816">
    <property type="term" value="P:calcium ion transport"/>
    <property type="evidence" value="ECO:0000314"/>
    <property type="project" value="MGI"/>
</dbReference>
<dbReference type="GO" id="GO:0006828">
    <property type="term" value="P:manganese ion transport"/>
    <property type="evidence" value="ECO:0000314"/>
    <property type="project" value="MGI"/>
</dbReference>
<dbReference type="FunFam" id="1.25.40.20:FF:000157">
    <property type="entry name" value="short transient receptor potential channel 6 isoform X1"/>
    <property type="match status" value="1"/>
</dbReference>
<dbReference type="FunFam" id="1.10.287.70:FF:000041">
    <property type="entry name" value="Transient receptor potential cation channel subfamily C member 7"/>
    <property type="match status" value="1"/>
</dbReference>
<dbReference type="Gene3D" id="1.10.287.70">
    <property type="match status" value="1"/>
</dbReference>
<dbReference type="Gene3D" id="1.25.40.20">
    <property type="entry name" value="Ankyrin repeat-containing domain"/>
    <property type="match status" value="1"/>
</dbReference>
<dbReference type="InterPro" id="IPR002110">
    <property type="entry name" value="Ankyrin_rpt"/>
</dbReference>
<dbReference type="InterPro" id="IPR036770">
    <property type="entry name" value="Ankyrin_rpt-contain_sf"/>
</dbReference>
<dbReference type="InterPro" id="IPR005821">
    <property type="entry name" value="Ion_trans_dom"/>
</dbReference>
<dbReference type="InterPro" id="IPR013555">
    <property type="entry name" value="TRP_dom"/>
</dbReference>
<dbReference type="InterPro" id="IPR005463">
    <property type="entry name" value="TRPC7_channel"/>
</dbReference>
<dbReference type="InterPro" id="IPR002153">
    <property type="entry name" value="TRPC_channel"/>
</dbReference>
<dbReference type="NCBIfam" id="TIGR00870">
    <property type="entry name" value="trp"/>
    <property type="match status" value="1"/>
</dbReference>
<dbReference type="PANTHER" id="PTHR10117:SF9">
    <property type="entry name" value="SHORT TRANSIENT RECEPTOR POTENTIAL CHANNEL 7"/>
    <property type="match status" value="1"/>
</dbReference>
<dbReference type="PANTHER" id="PTHR10117">
    <property type="entry name" value="TRANSIENT RECEPTOR POTENTIAL CHANNEL"/>
    <property type="match status" value="1"/>
</dbReference>
<dbReference type="Pfam" id="PF12796">
    <property type="entry name" value="Ank_2"/>
    <property type="match status" value="1"/>
</dbReference>
<dbReference type="Pfam" id="PF00520">
    <property type="entry name" value="Ion_trans"/>
    <property type="match status" value="1"/>
</dbReference>
<dbReference type="Pfam" id="PF08344">
    <property type="entry name" value="TRP_2"/>
    <property type="match status" value="1"/>
</dbReference>
<dbReference type="PRINTS" id="PR01097">
    <property type="entry name" value="TRNSRECEPTRP"/>
</dbReference>
<dbReference type="PRINTS" id="PR01648">
    <property type="entry name" value="TRPCHANNEL7"/>
</dbReference>
<dbReference type="SMART" id="SM00248">
    <property type="entry name" value="ANK"/>
    <property type="match status" value="3"/>
</dbReference>
<dbReference type="SMART" id="SM01420">
    <property type="entry name" value="TRP_2"/>
    <property type="match status" value="1"/>
</dbReference>
<dbReference type="SUPFAM" id="SSF48403">
    <property type="entry name" value="Ankyrin repeat"/>
    <property type="match status" value="1"/>
</dbReference>
<organism>
    <name type="scientific">Mus musculus</name>
    <name type="common">Mouse</name>
    <dbReference type="NCBI Taxonomy" id="10090"/>
    <lineage>
        <taxon>Eukaryota</taxon>
        <taxon>Metazoa</taxon>
        <taxon>Chordata</taxon>
        <taxon>Craniata</taxon>
        <taxon>Vertebrata</taxon>
        <taxon>Euteleostomi</taxon>
        <taxon>Mammalia</taxon>
        <taxon>Eutheria</taxon>
        <taxon>Euarchontoglires</taxon>
        <taxon>Glires</taxon>
        <taxon>Rodentia</taxon>
        <taxon>Myomorpha</taxon>
        <taxon>Muroidea</taxon>
        <taxon>Muridae</taxon>
        <taxon>Murinae</taxon>
        <taxon>Mus</taxon>
        <taxon>Mus</taxon>
    </lineage>
</organism>
<name>TRPC7_MOUSE</name>
<accession>Q9WVC5</accession>